<reference evidence="10" key="1">
    <citation type="journal article" date="2003" name="PLoS Biol.">
        <title>The genome sequence of Caenorhabditis briggsae: a platform for comparative genomics.</title>
        <authorList>
            <person name="Stein L.D."/>
            <person name="Bao Z."/>
            <person name="Blasiar D."/>
            <person name="Blumenthal T."/>
            <person name="Brent M.R."/>
            <person name="Chen N."/>
            <person name="Chinwalla A."/>
            <person name="Clarke L."/>
            <person name="Clee C."/>
            <person name="Coghlan A."/>
            <person name="Coulson A."/>
            <person name="D'Eustachio P."/>
            <person name="Fitch D.H.A."/>
            <person name="Fulton L.A."/>
            <person name="Fulton R.E."/>
            <person name="Griffiths-Jones S."/>
            <person name="Harris T.W."/>
            <person name="Hillier L.W."/>
            <person name="Kamath R."/>
            <person name="Kuwabara P.E."/>
            <person name="Mardis E.R."/>
            <person name="Marra M.A."/>
            <person name="Miner T.L."/>
            <person name="Minx P."/>
            <person name="Mullikin J.C."/>
            <person name="Plumb R.W."/>
            <person name="Rogers J."/>
            <person name="Schein J.E."/>
            <person name="Sohrmann M."/>
            <person name="Spieth J."/>
            <person name="Stajich J.E."/>
            <person name="Wei C."/>
            <person name="Willey D."/>
            <person name="Wilson R.K."/>
            <person name="Durbin R.M."/>
            <person name="Waterston R.H."/>
        </authorList>
    </citation>
    <scope>NUCLEOTIDE SEQUENCE [LARGE SCALE GENOMIC DNA]</scope>
    <source>
        <strain evidence="9 10">AF16</strain>
    </source>
</reference>
<reference evidence="8" key="2">
    <citation type="journal article" date="2006" name="Genetics">
        <title>Searching for neuronal left/right asymmetry: genomewide analysis of nematode receptor-type guanylyl cyclases.</title>
        <authorList>
            <person name="Ortiz C.O."/>
            <person name="Etchberger J.F."/>
            <person name="Posy S.L."/>
            <person name="Frokjaer-Jensen C."/>
            <person name="Lockery S."/>
            <person name="Honig B."/>
            <person name="Hobert O."/>
        </authorList>
    </citation>
    <scope>TISSUE SPECIFICITY</scope>
</reference>
<sequence length="1214" mass="136134">MEHLIFLLIFGGYSPSIAQITSSTTTTTPVPAANRRTIRVGVAAVQSTELDSIGWPMSGGAINLAIQKLRDDGFIAAFDFEINVNYTECDRSLGAAVGMEFMRSKKYDVVIGAPCQDPMEIMATMATYYTTPLLAWGLVTDSKFTDAERYPYLTNIMANSLSLGFSLVKLFEMMDWDRVALLYETSPQDYPLSIINDVETAINEYEDYSVNVVVKQAVPSGDLNDAQYISVLNRIKSRCRIVVAVIQTATPRRKYLRMITEQNMVSDEYVHIWLGLRSIGFGKQSAGLTKCELNCLSSGLTPVWEVLPDDGWNERAKLAATRLLVMDLSTDVPDVNYLNTFTSQCGAQVVNPPVSCETEQCKNASTSPPSAFARSLHDVFYLYGLAITNIYNTNPVNLANGQAINDAMQLTFAGDCSAQFFSKKNILTFLGLTGEVSINANNTRVPKLMLYALNENYDQASFMNLTYSLDGGASVSLGYTNEASLWFWYNGKRPLTIPICGFLGTECPQTFVDQYGALVFSIGGVLALAMLFLITCFFYVLRQRKLERDRIDAEWQIPLVKLQVPPKREKERMSKRSIQSGPSNITDTSKMTFDNTFSNYSIFYLDKEPVLSTAHPASNLDRTDYDTFVKLRKLDHDNINKFVGLSIDGAEYLAVWKMCMRGSLQDIIGQGNFSIDPFFMFCVIRDMAEGLKYLHNSFLHVHANLRSGTVLINESWQAKLTDFGLGNLAEEKKPMKRRQLWMAPEVIRGTLLPHQVEKPADIYSLAIIASEVLTRKEAWNMSERKDTVDEIVYRIKKGGPNSIRPDLDMDGVEINHSLLVLIRDCWSEDPTDRPGADIICNLLKNMMPKKGNLMDHVFNILEDYTTNLEVEVEDRTKELTAEKKKADVLLGRMLPKQVAERLKQGQTVEPEGFDSVTVFFSDVVKFTQLSQKCSPFQVVNLLNDLYSNFDAIIEEHGVYKVESIGDGYLCVSGLPQRNGNAHIKCIVELSLDFMAYCKAFKIPHLPREKVELRVGVNSGPCVAGVVGLSMPRYCLFGDTVNTASRMESNGKPSHIHLSAAAYTLLMKHYPNQYNTASRGDVIIKVGPLLGLFRPFQGKGVMETFWVFERNNQFMGNSSNMAYNPENKKKQKNDDEDVDDESSDGSSRAPNTPPMHDVNANSPPRQRKPGPPSSSPTFSKRSVSPILEEKAREIHNEETEALYRQFRRQETLALM</sequence>
<gene>
    <name evidence="11" type="primary">gcy-19</name>
    <name evidence="11" type="ORF">CBG17049</name>
</gene>
<organism evidence="10">
    <name type="scientific">Caenorhabditis briggsae</name>
    <dbReference type="NCBI Taxonomy" id="6238"/>
    <lineage>
        <taxon>Eukaryota</taxon>
        <taxon>Metazoa</taxon>
        <taxon>Ecdysozoa</taxon>
        <taxon>Nematoda</taxon>
        <taxon>Chromadorea</taxon>
        <taxon>Rhabditida</taxon>
        <taxon>Rhabditina</taxon>
        <taxon>Rhabditomorpha</taxon>
        <taxon>Rhabditoidea</taxon>
        <taxon>Rhabditidae</taxon>
        <taxon>Peloderinae</taxon>
        <taxon>Caenorhabditis</taxon>
    </lineage>
</organism>
<name>GCY19_CAEBR</name>
<protein>
    <recommendedName>
        <fullName evidence="8">Receptor-type guanylate cyclase gcy-19</fullName>
        <ecNumber evidence="1">4.6.1.2</ecNumber>
    </recommendedName>
</protein>
<evidence type="ECO:0000250" key="1">
    <source>
        <dbReference type="UniProtKB" id="Q19187"/>
    </source>
</evidence>
<evidence type="ECO:0000255" key="2"/>
<evidence type="ECO:0000255" key="3">
    <source>
        <dbReference type="PROSITE-ProRule" id="PRU00099"/>
    </source>
</evidence>
<evidence type="ECO:0000255" key="4">
    <source>
        <dbReference type="PROSITE-ProRule" id="PRU00159"/>
    </source>
</evidence>
<evidence type="ECO:0000255" key="5">
    <source>
        <dbReference type="PROSITE-ProRule" id="PRU00498"/>
    </source>
</evidence>
<evidence type="ECO:0000256" key="6">
    <source>
        <dbReference type="SAM" id="MobiDB-lite"/>
    </source>
</evidence>
<evidence type="ECO:0000269" key="7">
    <source>
    </source>
</evidence>
<evidence type="ECO:0000305" key="8"/>
<evidence type="ECO:0000312" key="9">
    <source>
        <dbReference type="EMBL" id="CAP34845.2"/>
    </source>
</evidence>
<evidence type="ECO:0000312" key="10">
    <source>
        <dbReference type="Proteomes" id="UP000008549"/>
    </source>
</evidence>
<evidence type="ECO:0000312" key="11">
    <source>
        <dbReference type="WormBase" id="CBG17049a"/>
    </source>
</evidence>
<keyword id="KW-1003">Cell membrane</keyword>
<keyword id="KW-0141">cGMP biosynthesis</keyword>
<keyword id="KW-0325">Glycoprotein</keyword>
<keyword id="KW-0342">GTP-binding</keyword>
<keyword id="KW-0456">Lyase</keyword>
<keyword id="KW-0472">Membrane</keyword>
<keyword id="KW-0547">Nucleotide-binding</keyword>
<keyword id="KW-0675">Receptor</keyword>
<keyword id="KW-1185">Reference proteome</keyword>
<keyword id="KW-0732">Signal</keyword>
<keyword id="KW-0812">Transmembrane</keyword>
<keyword id="KW-1133">Transmembrane helix</keyword>
<proteinExistence type="evidence at transcript level"/>
<accession>A8XQC7</accession>
<feature type="signal peptide" evidence="2">
    <location>
        <begin position="1"/>
        <end position="18"/>
    </location>
</feature>
<feature type="chain" id="PRO_0000433287" description="Receptor-type guanylate cyclase gcy-19" evidence="2">
    <location>
        <begin position="19"/>
        <end position="1214"/>
    </location>
</feature>
<feature type="topological domain" description="Extracellular" evidence="2">
    <location>
        <begin position="19"/>
        <end position="517"/>
    </location>
</feature>
<feature type="transmembrane region" description="Helical" evidence="2">
    <location>
        <begin position="518"/>
        <end position="538"/>
    </location>
</feature>
<feature type="topological domain" description="Cytoplasmic" evidence="2">
    <location>
        <begin position="539"/>
        <end position="1214"/>
    </location>
</feature>
<feature type="domain" description="Protein kinase" evidence="4">
    <location>
        <begin position="572"/>
        <end position="859"/>
    </location>
</feature>
<feature type="domain" description="Guanylate cyclase" evidence="3">
    <location>
        <begin position="917"/>
        <end position="1047"/>
    </location>
</feature>
<feature type="region of interest" description="Disordered" evidence="6">
    <location>
        <begin position="1116"/>
        <end position="1197"/>
    </location>
</feature>
<feature type="compositionally biased region" description="Acidic residues" evidence="6">
    <location>
        <begin position="1133"/>
        <end position="1142"/>
    </location>
</feature>
<feature type="compositionally biased region" description="Basic and acidic residues" evidence="6">
    <location>
        <begin position="1186"/>
        <end position="1197"/>
    </location>
</feature>
<feature type="glycosylation site" description="N-linked (GlcNAc...) asparagine" evidence="5">
    <location>
        <position position="85"/>
    </location>
</feature>
<feature type="glycosylation site" description="N-linked (GlcNAc...) asparagine" evidence="5">
    <location>
        <position position="363"/>
    </location>
</feature>
<feature type="glycosylation site" description="N-linked (GlcNAc...) asparagine" evidence="5">
    <location>
        <position position="441"/>
    </location>
</feature>
<feature type="glycosylation site" description="N-linked (GlcNAc...) asparagine" evidence="5">
    <location>
        <position position="464"/>
    </location>
</feature>
<comment type="function">
    <text evidence="1">Guanylate cyclase involved in the production of the second messenger cGMP (By similarity).</text>
</comment>
<comment type="catalytic activity">
    <reaction evidence="1">
        <text>GTP = 3',5'-cyclic GMP + diphosphate</text>
        <dbReference type="Rhea" id="RHEA:13665"/>
        <dbReference type="ChEBI" id="CHEBI:33019"/>
        <dbReference type="ChEBI" id="CHEBI:37565"/>
        <dbReference type="ChEBI" id="CHEBI:57746"/>
        <dbReference type="EC" id="4.6.1.2"/>
    </reaction>
</comment>
<comment type="subcellular location">
    <subcellularLocation>
        <location evidence="8">Cell membrane</location>
        <topology evidence="8">Single-pass type I membrane protein</topology>
    </subcellularLocation>
</comment>
<comment type="tissue specificity">
    <text evidence="7">Expressed asymmetrically in ASE right (ASER) sensory neuron.</text>
</comment>
<comment type="domain">
    <text evidence="4">The protein kinase domain is predicted to be catalytically inactive.</text>
</comment>
<comment type="similarity">
    <text evidence="3">Belongs to the adenylyl cyclase class-4/guanylyl cyclase family.</text>
</comment>
<dbReference type="EC" id="4.6.1.2" evidence="1"/>
<dbReference type="EMBL" id="HE601138">
    <property type="protein sequence ID" value="CAP34845.2"/>
    <property type="molecule type" value="Genomic_DNA"/>
</dbReference>
<dbReference type="SMR" id="A8XQC7"/>
<dbReference type="FunCoup" id="A8XQC7">
    <property type="interactions" value="78"/>
</dbReference>
<dbReference type="STRING" id="6238.A8XQC7"/>
<dbReference type="GlyCosmos" id="A8XQC7">
    <property type="glycosylation" value="4 sites, No reported glycans"/>
</dbReference>
<dbReference type="WormBase" id="CBG17049a">
    <property type="protein sequence ID" value="CBP39728"/>
    <property type="gene ID" value="WBGene00036817"/>
    <property type="gene designation" value="Cbr-gcy-19"/>
</dbReference>
<dbReference type="eggNOG" id="KOG1023">
    <property type="taxonomic scope" value="Eukaryota"/>
</dbReference>
<dbReference type="HOGENOM" id="CLU_001072_1_3_1"/>
<dbReference type="InParanoid" id="A8XQC7"/>
<dbReference type="OMA" id="SIDPFFM"/>
<dbReference type="Proteomes" id="UP000008549">
    <property type="component" value="Unassembled WGS sequence"/>
</dbReference>
<dbReference type="GO" id="GO:0005886">
    <property type="term" value="C:plasma membrane"/>
    <property type="evidence" value="ECO:0000318"/>
    <property type="project" value="GO_Central"/>
</dbReference>
<dbReference type="GO" id="GO:0005524">
    <property type="term" value="F:ATP binding"/>
    <property type="evidence" value="ECO:0007669"/>
    <property type="project" value="InterPro"/>
</dbReference>
<dbReference type="GO" id="GO:0005525">
    <property type="term" value="F:GTP binding"/>
    <property type="evidence" value="ECO:0007669"/>
    <property type="project" value="UniProtKB-KW"/>
</dbReference>
<dbReference type="GO" id="GO:0004383">
    <property type="term" value="F:guanylate cyclase activity"/>
    <property type="evidence" value="ECO:0000318"/>
    <property type="project" value="GO_Central"/>
</dbReference>
<dbReference type="GO" id="GO:0001653">
    <property type="term" value="F:peptide receptor activity"/>
    <property type="evidence" value="ECO:0000318"/>
    <property type="project" value="GO_Central"/>
</dbReference>
<dbReference type="GO" id="GO:0004672">
    <property type="term" value="F:protein kinase activity"/>
    <property type="evidence" value="ECO:0007669"/>
    <property type="project" value="InterPro"/>
</dbReference>
<dbReference type="GO" id="GO:0006182">
    <property type="term" value="P:cGMP biosynthetic process"/>
    <property type="evidence" value="ECO:0000318"/>
    <property type="project" value="GO_Central"/>
</dbReference>
<dbReference type="GO" id="GO:0035556">
    <property type="term" value="P:intracellular signal transduction"/>
    <property type="evidence" value="ECO:0007669"/>
    <property type="project" value="InterPro"/>
</dbReference>
<dbReference type="GO" id="GO:0007168">
    <property type="term" value="P:receptor guanylyl cyclase signaling pathway"/>
    <property type="evidence" value="ECO:0000318"/>
    <property type="project" value="GO_Central"/>
</dbReference>
<dbReference type="CDD" id="cd07302">
    <property type="entry name" value="CHD"/>
    <property type="match status" value="1"/>
</dbReference>
<dbReference type="CDD" id="cd06352">
    <property type="entry name" value="PBP1_NPR_GC-like"/>
    <property type="match status" value="1"/>
</dbReference>
<dbReference type="FunFam" id="3.30.70.1230:FF:000023">
    <property type="entry name" value="Guanylate cyclase"/>
    <property type="match status" value="1"/>
</dbReference>
<dbReference type="FunFam" id="3.40.50.2300:FF:000447">
    <property type="entry name" value="Receptor-type guanylate cyclase gcy-19"/>
    <property type="match status" value="1"/>
</dbReference>
<dbReference type="Gene3D" id="3.40.50.2300">
    <property type="match status" value="2"/>
</dbReference>
<dbReference type="Gene3D" id="6.10.250.780">
    <property type="match status" value="1"/>
</dbReference>
<dbReference type="Gene3D" id="3.30.70.1230">
    <property type="entry name" value="Nucleotide cyclase"/>
    <property type="match status" value="1"/>
</dbReference>
<dbReference type="Gene3D" id="1.10.510.10">
    <property type="entry name" value="Transferase(Phosphotransferase) domain 1"/>
    <property type="match status" value="1"/>
</dbReference>
<dbReference type="InterPro" id="IPR001054">
    <property type="entry name" value="A/G_cyclase"/>
</dbReference>
<dbReference type="InterPro" id="IPR018297">
    <property type="entry name" value="A/G_cyclase_CS"/>
</dbReference>
<dbReference type="InterPro" id="IPR001828">
    <property type="entry name" value="ANF_lig-bd_rcpt"/>
</dbReference>
<dbReference type="InterPro" id="IPR050401">
    <property type="entry name" value="Cyclic_nucleotide_synthase"/>
</dbReference>
<dbReference type="InterPro" id="IPR011009">
    <property type="entry name" value="Kinase-like_dom_sf"/>
</dbReference>
<dbReference type="InterPro" id="IPR029787">
    <property type="entry name" value="Nucleotide_cyclase"/>
</dbReference>
<dbReference type="InterPro" id="IPR028082">
    <property type="entry name" value="Peripla_BP_I"/>
</dbReference>
<dbReference type="InterPro" id="IPR000719">
    <property type="entry name" value="Prot_kinase_dom"/>
</dbReference>
<dbReference type="PANTHER" id="PTHR11920">
    <property type="entry name" value="GUANYLYL CYCLASE"/>
    <property type="match status" value="1"/>
</dbReference>
<dbReference type="PANTHER" id="PTHR11920:SF71">
    <property type="entry name" value="RECEPTOR-TYPE GUANYLATE CYCLASE GCY-19"/>
    <property type="match status" value="1"/>
</dbReference>
<dbReference type="Pfam" id="PF01094">
    <property type="entry name" value="ANF_receptor"/>
    <property type="match status" value="1"/>
</dbReference>
<dbReference type="Pfam" id="PF00211">
    <property type="entry name" value="Guanylate_cyc"/>
    <property type="match status" value="1"/>
</dbReference>
<dbReference type="Pfam" id="PF00069">
    <property type="entry name" value="Pkinase"/>
    <property type="match status" value="1"/>
</dbReference>
<dbReference type="SMART" id="SM00044">
    <property type="entry name" value="CYCc"/>
    <property type="match status" value="1"/>
</dbReference>
<dbReference type="SUPFAM" id="SSF55073">
    <property type="entry name" value="Nucleotide cyclase"/>
    <property type="match status" value="1"/>
</dbReference>
<dbReference type="SUPFAM" id="SSF53822">
    <property type="entry name" value="Periplasmic binding protein-like I"/>
    <property type="match status" value="1"/>
</dbReference>
<dbReference type="SUPFAM" id="SSF56112">
    <property type="entry name" value="Protein kinase-like (PK-like)"/>
    <property type="match status" value="1"/>
</dbReference>
<dbReference type="PROSITE" id="PS00452">
    <property type="entry name" value="GUANYLATE_CYCLASE_1"/>
    <property type="match status" value="1"/>
</dbReference>
<dbReference type="PROSITE" id="PS50125">
    <property type="entry name" value="GUANYLATE_CYCLASE_2"/>
    <property type="match status" value="1"/>
</dbReference>
<dbReference type="PROSITE" id="PS50011">
    <property type="entry name" value="PROTEIN_KINASE_DOM"/>
    <property type="match status" value="1"/>
</dbReference>